<comment type="function">
    <text evidence="6 7">May have a role in immune function. Probably involved in the processing of antigenic peptides during MHC class II-mediated antigen presentation. May play a role in activation-induced lymphocyte depletion in the thymus, and in neuronal degeneration and glial cell activation in the brain.</text>
</comment>
<comment type="catalytic activity">
    <reaction evidence="9">
        <text>Similar to cathepsin D, but slightly broader specificity.</text>
        <dbReference type="EC" id="3.4.23.34"/>
    </reaction>
</comment>
<comment type="subunit">
    <text evidence="1">Homodimer; disulfide-linked.</text>
</comment>
<comment type="subcellular location">
    <subcellularLocation>
        <location evidence="7">Endosome</location>
    </subcellularLocation>
    <text>The proenzyme is localized to the endoplasmic reticulum and Golgi apparatus, while the mature enzyme is localized to the endosome.</text>
</comment>
<comment type="tissue specificity">
    <text evidence="5 10">Expressed abundantly in the stomach, club cells and alveolar macrophages of the lung, brain microglia, spleen and activated B-lymphocytes. Not expressed in resting B-lymphocytes.</text>
</comment>
<comment type="PTM">
    <text evidence="8">Glycosylated. The nature of the carbohydrate chain varies between cell types. In fibroblasts, the proenzyme contains a high mannose-type oligosaccharide, while the mature enzyme contains a complex-type oligosaccharide.</text>
</comment>
<comment type="similarity">
    <text evidence="11">Belongs to the peptidase A1 family.</text>
</comment>
<organism>
    <name type="scientific">Mus musculus</name>
    <name type="common">Mouse</name>
    <dbReference type="NCBI Taxonomy" id="10090"/>
    <lineage>
        <taxon>Eukaryota</taxon>
        <taxon>Metazoa</taxon>
        <taxon>Chordata</taxon>
        <taxon>Craniata</taxon>
        <taxon>Vertebrata</taxon>
        <taxon>Euteleostomi</taxon>
        <taxon>Mammalia</taxon>
        <taxon>Eutheria</taxon>
        <taxon>Euarchontoglires</taxon>
        <taxon>Glires</taxon>
        <taxon>Rodentia</taxon>
        <taxon>Myomorpha</taxon>
        <taxon>Muroidea</taxon>
        <taxon>Muridae</taxon>
        <taxon>Murinae</taxon>
        <taxon>Mus</taxon>
        <taxon>Mus</taxon>
    </lineage>
</organism>
<proteinExistence type="evidence at protein level"/>
<feature type="signal peptide" evidence="1">
    <location>
        <begin position="1"/>
        <end position="20"/>
    </location>
</feature>
<feature type="propeptide" id="PRO_0000025976" description="Activation peptide" evidence="1">
    <location>
        <begin position="21"/>
        <end position="59"/>
    </location>
</feature>
<feature type="chain" id="PRO_0000025977" description="Cathepsin E">
    <location>
        <begin position="60"/>
        <end position="397"/>
    </location>
</feature>
<feature type="domain" description="Peptidase A1" evidence="3">
    <location>
        <begin position="79"/>
        <end position="393"/>
    </location>
</feature>
<feature type="active site" evidence="4">
    <location>
        <position position="97"/>
    </location>
</feature>
<feature type="active site" evidence="4">
    <location>
        <position position="282"/>
    </location>
</feature>
<feature type="glycosylation site" description="N-linked (GlcNAc...) asparagine" evidence="2">
    <location>
        <position position="91"/>
    </location>
</feature>
<feature type="glycosylation site" description="N-linked (GlcNAc...) asparagine" evidence="2">
    <location>
        <position position="323"/>
    </location>
</feature>
<feature type="disulfide bond" description="Interchain" evidence="11">
    <location>
        <position position="61"/>
    </location>
</feature>
<feature type="disulfide bond" evidence="1">
    <location>
        <begin position="110"/>
        <end position="115"/>
    </location>
</feature>
<feature type="disulfide bond" evidence="1">
    <location>
        <begin position="273"/>
        <end position="277"/>
    </location>
</feature>
<feature type="sequence conflict" description="In Ref. 1; CAA66056, 5; CAJ18460 and 7; AAH05432." evidence="11" ref="1 5 7">
    <original>Q</original>
    <variation>H</variation>
    <location>
        <position position="297"/>
    </location>
</feature>
<feature type="sequence conflict" description="In Ref. 1; CAA66056, 2; CAA71859, 5; CAJ18460 and 7; AAH05432." evidence="11" ref="1 2 5 7">
    <original>E</original>
    <variation>D</variation>
    <location>
        <position position="347"/>
    </location>
</feature>
<accession>P70269</accession>
<accession>O35647</accession>
<accession>Q3UKT5</accession>
<accession>Q4FK00</accession>
<dbReference type="EC" id="3.4.23.34"/>
<dbReference type="EMBL" id="X97399">
    <property type="protein sequence ID" value="CAA66056.1"/>
    <property type="molecule type" value="mRNA"/>
</dbReference>
<dbReference type="EMBL" id="Y10928">
    <property type="protein sequence ID" value="CAA71859.1"/>
    <property type="molecule type" value="Genomic_DNA"/>
</dbReference>
<dbReference type="EMBL" id="AJ009840">
    <property type="protein sequence ID" value="CAA08880.2"/>
    <property type="molecule type" value="Genomic_DNA"/>
</dbReference>
<dbReference type="EMBL" id="AJ009841">
    <property type="protein sequence ID" value="CAA08880.2"/>
    <property type="status" value="JOINED"/>
    <property type="molecule type" value="Genomic_DNA"/>
</dbReference>
<dbReference type="EMBL" id="AJ009842">
    <property type="protein sequence ID" value="CAA08880.2"/>
    <property type="status" value="JOINED"/>
    <property type="molecule type" value="Genomic_DNA"/>
</dbReference>
<dbReference type="EMBL" id="AJ009843">
    <property type="protein sequence ID" value="CAA08880.2"/>
    <property type="status" value="JOINED"/>
    <property type="molecule type" value="Genomic_DNA"/>
</dbReference>
<dbReference type="EMBL" id="AJ009844">
    <property type="protein sequence ID" value="CAA08880.2"/>
    <property type="status" value="JOINED"/>
    <property type="molecule type" value="Genomic_DNA"/>
</dbReference>
<dbReference type="EMBL" id="AJ009845">
    <property type="protein sequence ID" value="CAA08880.2"/>
    <property type="status" value="JOINED"/>
    <property type="molecule type" value="Genomic_DNA"/>
</dbReference>
<dbReference type="EMBL" id="AJ009846">
    <property type="protein sequence ID" value="CAA08880.2"/>
    <property type="status" value="JOINED"/>
    <property type="molecule type" value="Genomic_DNA"/>
</dbReference>
<dbReference type="EMBL" id="AJ009847">
    <property type="protein sequence ID" value="CAA08880.2"/>
    <property type="status" value="JOINED"/>
    <property type="molecule type" value="Genomic_DNA"/>
</dbReference>
<dbReference type="EMBL" id="AJ009848">
    <property type="protein sequence ID" value="CAA08880.2"/>
    <property type="status" value="JOINED"/>
    <property type="molecule type" value="Genomic_DNA"/>
</dbReference>
<dbReference type="EMBL" id="AK143581">
    <property type="protein sequence ID" value="BAE25449.1"/>
    <property type="molecule type" value="mRNA"/>
</dbReference>
<dbReference type="EMBL" id="AK145875">
    <property type="protein sequence ID" value="BAE26716.1"/>
    <property type="molecule type" value="mRNA"/>
</dbReference>
<dbReference type="EMBL" id="AK157907">
    <property type="protein sequence ID" value="BAE34257.1"/>
    <property type="molecule type" value="mRNA"/>
</dbReference>
<dbReference type="EMBL" id="AK165271">
    <property type="protein sequence ID" value="BAE38113.1"/>
    <property type="molecule type" value="mRNA"/>
</dbReference>
<dbReference type="EMBL" id="CT010252">
    <property type="protein sequence ID" value="CAJ18460.1"/>
    <property type="molecule type" value="mRNA"/>
</dbReference>
<dbReference type="EMBL" id="CH466520">
    <property type="protein sequence ID" value="EDL39705.1"/>
    <property type="molecule type" value="Genomic_DNA"/>
</dbReference>
<dbReference type="EMBL" id="BC005432">
    <property type="protein sequence ID" value="AAH05432.1"/>
    <property type="molecule type" value="mRNA"/>
</dbReference>
<dbReference type="CCDS" id="CCDS15271.1"/>
<dbReference type="RefSeq" id="NP_031825.2">
    <property type="nucleotide sequence ID" value="NM_007799.3"/>
</dbReference>
<dbReference type="SMR" id="P70269"/>
<dbReference type="FunCoup" id="P70269">
    <property type="interactions" value="795"/>
</dbReference>
<dbReference type="STRING" id="10090.ENSMUSP00000073072"/>
<dbReference type="BindingDB" id="P70269"/>
<dbReference type="ChEMBL" id="CHEMBL1681627"/>
<dbReference type="MEROPS" id="A01.010"/>
<dbReference type="GlyCosmos" id="P70269">
    <property type="glycosylation" value="2 sites, No reported glycans"/>
</dbReference>
<dbReference type="GlyGen" id="P70269">
    <property type="glycosylation" value="2 sites"/>
</dbReference>
<dbReference type="PhosphoSitePlus" id="P70269"/>
<dbReference type="SwissPalm" id="P70269"/>
<dbReference type="jPOST" id="P70269"/>
<dbReference type="PaxDb" id="10090-ENSMUSP00000073072"/>
<dbReference type="ProteomicsDB" id="265539"/>
<dbReference type="Antibodypedia" id="1957">
    <property type="antibodies" value="301 antibodies from 30 providers"/>
</dbReference>
<dbReference type="DNASU" id="13034"/>
<dbReference type="Ensembl" id="ENSMUST00000073350.13">
    <property type="protein sequence ID" value="ENSMUSP00000073072.7"/>
    <property type="gene ID" value="ENSMUSG00000004552.17"/>
</dbReference>
<dbReference type="GeneID" id="13034"/>
<dbReference type="KEGG" id="mmu:13034"/>
<dbReference type="UCSC" id="uc007cnn.2">
    <property type="organism name" value="mouse"/>
</dbReference>
<dbReference type="AGR" id="MGI:107361"/>
<dbReference type="CTD" id="1510"/>
<dbReference type="MGI" id="MGI:107361">
    <property type="gene designation" value="Ctse"/>
</dbReference>
<dbReference type="VEuPathDB" id="HostDB:ENSMUSG00000004552"/>
<dbReference type="eggNOG" id="KOG1339">
    <property type="taxonomic scope" value="Eukaryota"/>
</dbReference>
<dbReference type="GeneTree" id="ENSGT00940000161300"/>
<dbReference type="InParanoid" id="P70269"/>
<dbReference type="OMA" id="YGVECAN"/>
<dbReference type="OrthoDB" id="771136at2759"/>
<dbReference type="PhylomeDB" id="P70269"/>
<dbReference type="TreeFam" id="TF314990"/>
<dbReference type="BRENDA" id="3.4.23.34">
    <property type="organism ID" value="3474"/>
</dbReference>
<dbReference type="Reactome" id="R-MMU-2132295">
    <property type="pathway name" value="MHC class II antigen presentation"/>
</dbReference>
<dbReference type="BioGRID-ORCS" id="13034">
    <property type="hits" value="4 hits in 79 CRISPR screens"/>
</dbReference>
<dbReference type="ChiTaRS" id="Ctse">
    <property type="organism name" value="mouse"/>
</dbReference>
<dbReference type="PRO" id="PR:P70269"/>
<dbReference type="Proteomes" id="UP000000589">
    <property type="component" value="Chromosome 1"/>
</dbReference>
<dbReference type="RNAct" id="P70269">
    <property type="molecule type" value="protein"/>
</dbReference>
<dbReference type="Bgee" id="ENSMUSG00000004552">
    <property type="expression patterns" value="Expressed in epithelium of stomach and 161 other cell types or tissues"/>
</dbReference>
<dbReference type="ExpressionAtlas" id="P70269">
    <property type="expression patterns" value="baseline and differential"/>
</dbReference>
<dbReference type="GO" id="GO:0005768">
    <property type="term" value="C:endosome"/>
    <property type="evidence" value="ECO:0000314"/>
    <property type="project" value="UniProtKB"/>
</dbReference>
<dbReference type="GO" id="GO:0004190">
    <property type="term" value="F:aspartic-type endopeptidase activity"/>
    <property type="evidence" value="ECO:0000314"/>
    <property type="project" value="UniProtKB"/>
</dbReference>
<dbReference type="GO" id="GO:0042802">
    <property type="term" value="F:identical protein binding"/>
    <property type="evidence" value="ECO:0000353"/>
    <property type="project" value="MGI"/>
</dbReference>
<dbReference type="GO" id="GO:0019886">
    <property type="term" value="P:antigen processing and presentation of exogenous peptide antigen via MHC class II"/>
    <property type="evidence" value="ECO:0000314"/>
    <property type="project" value="UniProtKB"/>
</dbReference>
<dbReference type="GO" id="GO:0006508">
    <property type="term" value="P:proteolysis"/>
    <property type="evidence" value="ECO:0007669"/>
    <property type="project" value="UniProtKB-KW"/>
</dbReference>
<dbReference type="FunFam" id="2.40.70.10:FF:000006">
    <property type="entry name" value="Cathepsin E"/>
    <property type="match status" value="1"/>
</dbReference>
<dbReference type="FunFam" id="2.40.70.10:FF:000004">
    <property type="entry name" value="Pepsin A"/>
    <property type="match status" value="1"/>
</dbReference>
<dbReference type="Gene3D" id="6.10.140.60">
    <property type="match status" value="1"/>
</dbReference>
<dbReference type="Gene3D" id="2.40.70.10">
    <property type="entry name" value="Acid Proteases"/>
    <property type="match status" value="2"/>
</dbReference>
<dbReference type="InterPro" id="IPR001461">
    <property type="entry name" value="Aspartic_peptidase_A1"/>
</dbReference>
<dbReference type="InterPro" id="IPR001969">
    <property type="entry name" value="Aspartic_peptidase_AS"/>
</dbReference>
<dbReference type="InterPro" id="IPR012848">
    <property type="entry name" value="Aspartic_peptidase_N"/>
</dbReference>
<dbReference type="InterPro" id="IPR033121">
    <property type="entry name" value="PEPTIDASE_A1"/>
</dbReference>
<dbReference type="InterPro" id="IPR021109">
    <property type="entry name" value="Peptidase_aspartic_dom_sf"/>
</dbReference>
<dbReference type="PANTHER" id="PTHR47966">
    <property type="entry name" value="BETA-SITE APP-CLEAVING ENZYME, ISOFORM A-RELATED"/>
    <property type="match status" value="1"/>
</dbReference>
<dbReference type="PANTHER" id="PTHR47966:SF26">
    <property type="entry name" value="CATHEPSIN E"/>
    <property type="match status" value="1"/>
</dbReference>
<dbReference type="Pfam" id="PF07966">
    <property type="entry name" value="A1_Propeptide"/>
    <property type="match status" value="1"/>
</dbReference>
<dbReference type="Pfam" id="PF00026">
    <property type="entry name" value="Asp"/>
    <property type="match status" value="1"/>
</dbReference>
<dbReference type="PRINTS" id="PR00792">
    <property type="entry name" value="PEPSIN"/>
</dbReference>
<dbReference type="SUPFAM" id="SSF50630">
    <property type="entry name" value="Acid proteases"/>
    <property type="match status" value="1"/>
</dbReference>
<dbReference type="PROSITE" id="PS00141">
    <property type="entry name" value="ASP_PROTEASE"/>
    <property type="match status" value="2"/>
</dbReference>
<dbReference type="PROSITE" id="PS51767">
    <property type="entry name" value="PEPTIDASE_A1"/>
    <property type="match status" value="1"/>
</dbReference>
<gene>
    <name type="primary">Ctse</name>
</gene>
<sequence length="397" mass="42938">MKPLLVLLLLLLLDLAQAQGALHRVPLRRHQSLRKKLRAQGQLSEFWRSHNLDMTRLSESCNVYSSVNEPLINYLDMEYFGTISIGTPPQNFTVIFDTGSSNLWVPSVYCTSPACKAHPVFHPSQSDTYTEVGNHFSIQYGTGSLTGIIGADQVSVEGLTVDGQQFGESVKEPGQTFVNAEFDGILGLGYPSLAAGGVTPVFDNMMAQNLVALPMFSVYLSSDPQGGSGSELTFGGYDPSHFSGSLNWIPVTKQAYWQIALDGIQVGDTVMFCSEGCQAIVDTGTSLITGPPDKIKQLQEAIGATPIDGEYAVDCATLDTMPNVTFLINEVSYTLNPTDYILPDLVEGMQFCGSGFQGLDIPPPAGPLWILGDVFIRQFYSVFDRGNNQVGLAPAVP</sequence>
<keyword id="KW-0064">Aspartyl protease</keyword>
<keyword id="KW-0068">Autocatalytic cleavage</keyword>
<keyword id="KW-1015">Disulfide bond</keyword>
<keyword id="KW-0967">Endosome</keyword>
<keyword id="KW-0325">Glycoprotein</keyword>
<keyword id="KW-0378">Hydrolase</keyword>
<keyword id="KW-0645">Protease</keyword>
<keyword id="KW-1185">Reference proteome</keyword>
<keyword id="KW-0732">Signal</keyword>
<keyword id="KW-0865">Zymogen</keyword>
<name>CATE_MOUSE</name>
<reference key="1">
    <citation type="journal article" date="1997" name="FEBS Lett.">
        <title>Cloning, expression and characterisation of murine procathepsin E.</title>
        <authorList>
            <person name="Tatnell P.J."/>
            <person name="Lees W.E."/>
            <person name="Kay J."/>
        </authorList>
    </citation>
    <scope>NUCLEOTIDE SEQUENCE [MRNA]</scope>
    <scope>CATALYTIC ACTIVITY</scope>
    <source>
        <strain>BALB/cJ</strain>
        <tissue>Spleen</tissue>
    </source>
</reference>
<reference key="2">
    <citation type="journal article" date="1998" name="Biochim. Biophys. Acta">
        <title>Mouse procathepsin E gene: molecular organisation and chromosomal localisation.</title>
        <authorList>
            <person name="Tatnell P.J."/>
            <person name="Roth W."/>
            <person name="Deussing J."/>
            <person name="Peters C."/>
            <person name="Kay J."/>
        </authorList>
    </citation>
    <scope>NUCLEOTIDE SEQUENCE [GENOMIC DNA]</scope>
    <source>
        <strain>129/SvJ</strain>
    </source>
</reference>
<reference key="3">
    <citation type="journal article" date="1998" name="Biomed. Res.">
        <title>Cathepsin E gene in mouse.</title>
        <authorList>
            <person name="Yonezawa S."/>
            <person name="Masaki S."/>
            <person name="Hanai A."/>
            <person name="Ono T."/>
            <person name="Sonta S."/>
            <person name="Hirai H."/>
            <person name="Ichinose M."/>
            <person name="Miki K."/>
            <person name="Takahashi K."/>
            <person name="Kageyama T."/>
        </authorList>
    </citation>
    <scope>NUCLEOTIDE SEQUENCE [GENOMIC DNA]</scope>
    <scope>TISSUE SPECIFICITY</scope>
    <source>
        <strain>129/SvJ</strain>
        <tissue>Gastric mucosa</tissue>
    </source>
</reference>
<reference key="4">
    <citation type="journal article" date="2005" name="Science">
        <title>The transcriptional landscape of the mammalian genome.</title>
        <authorList>
            <person name="Carninci P."/>
            <person name="Kasukawa T."/>
            <person name="Katayama S."/>
            <person name="Gough J."/>
            <person name="Frith M.C."/>
            <person name="Maeda N."/>
            <person name="Oyama R."/>
            <person name="Ravasi T."/>
            <person name="Lenhard B."/>
            <person name="Wells C."/>
            <person name="Kodzius R."/>
            <person name="Shimokawa K."/>
            <person name="Bajic V.B."/>
            <person name="Brenner S.E."/>
            <person name="Batalov S."/>
            <person name="Forrest A.R."/>
            <person name="Zavolan M."/>
            <person name="Davis M.J."/>
            <person name="Wilming L.G."/>
            <person name="Aidinis V."/>
            <person name="Allen J.E."/>
            <person name="Ambesi-Impiombato A."/>
            <person name="Apweiler R."/>
            <person name="Aturaliya R.N."/>
            <person name="Bailey T.L."/>
            <person name="Bansal M."/>
            <person name="Baxter L."/>
            <person name="Beisel K.W."/>
            <person name="Bersano T."/>
            <person name="Bono H."/>
            <person name="Chalk A.M."/>
            <person name="Chiu K.P."/>
            <person name="Choudhary V."/>
            <person name="Christoffels A."/>
            <person name="Clutterbuck D.R."/>
            <person name="Crowe M.L."/>
            <person name="Dalla E."/>
            <person name="Dalrymple B.P."/>
            <person name="de Bono B."/>
            <person name="Della Gatta G."/>
            <person name="di Bernardo D."/>
            <person name="Down T."/>
            <person name="Engstrom P."/>
            <person name="Fagiolini M."/>
            <person name="Faulkner G."/>
            <person name="Fletcher C.F."/>
            <person name="Fukushima T."/>
            <person name="Furuno M."/>
            <person name="Futaki S."/>
            <person name="Gariboldi M."/>
            <person name="Georgii-Hemming P."/>
            <person name="Gingeras T.R."/>
            <person name="Gojobori T."/>
            <person name="Green R.E."/>
            <person name="Gustincich S."/>
            <person name="Harbers M."/>
            <person name="Hayashi Y."/>
            <person name="Hensch T.K."/>
            <person name="Hirokawa N."/>
            <person name="Hill D."/>
            <person name="Huminiecki L."/>
            <person name="Iacono M."/>
            <person name="Ikeo K."/>
            <person name="Iwama A."/>
            <person name="Ishikawa T."/>
            <person name="Jakt M."/>
            <person name="Kanapin A."/>
            <person name="Katoh M."/>
            <person name="Kawasawa Y."/>
            <person name="Kelso J."/>
            <person name="Kitamura H."/>
            <person name="Kitano H."/>
            <person name="Kollias G."/>
            <person name="Krishnan S.P."/>
            <person name="Kruger A."/>
            <person name="Kummerfeld S.K."/>
            <person name="Kurochkin I.V."/>
            <person name="Lareau L.F."/>
            <person name="Lazarevic D."/>
            <person name="Lipovich L."/>
            <person name="Liu J."/>
            <person name="Liuni S."/>
            <person name="McWilliam S."/>
            <person name="Madan Babu M."/>
            <person name="Madera M."/>
            <person name="Marchionni L."/>
            <person name="Matsuda H."/>
            <person name="Matsuzawa S."/>
            <person name="Miki H."/>
            <person name="Mignone F."/>
            <person name="Miyake S."/>
            <person name="Morris K."/>
            <person name="Mottagui-Tabar S."/>
            <person name="Mulder N."/>
            <person name="Nakano N."/>
            <person name="Nakauchi H."/>
            <person name="Ng P."/>
            <person name="Nilsson R."/>
            <person name="Nishiguchi S."/>
            <person name="Nishikawa S."/>
            <person name="Nori F."/>
            <person name="Ohara O."/>
            <person name="Okazaki Y."/>
            <person name="Orlando V."/>
            <person name="Pang K.C."/>
            <person name="Pavan W.J."/>
            <person name="Pavesi G."/>
            <person name="Pesole G."/>
            <person name="Petrovsky N."/>
            <person name="Piazza S."/>
            <person name="Reed J."/>
            <person name="Reid J.F."/>
            <person name="Ring B.Z."/>
            <person name="Ringwald M."/>
            <person name="Rost B."/>
            <person name="Ruan Y."/>
            <person name="Salzberg S.L."/>
            <person name="Sandelin A."/>
            <person name="Schneider C."/>
            <person name="Schoenbach C."/>
            <person name="Sekiguchi K."/>
            <person name="Semple C.A."/>
            <person name="Seno S."/>
            <person name="Sessa L."/>
            <person name="Sheng Y."/>
            <person name="Shibata Y."/>
            <person name="Shimada H."/>
            <person name="Shimada K."/>
            <person name="Silva D."/>
            <person name="Sinclair B."/>
            <person name="Sperling S."/>
            <person name="Stupka E."/>
            <person name="Sugiura K."/>
            <person name="Sultana R."/>
            <person name="Takenaka Y."/>
            <person name="Taki K."/>
            <person name="Tammoja K."/>
            <person name="Tan S.L."/>
            <person name="Tang S."/>
            <person name="Taylor M.S."/>
            <person name="Tegner J."/>
            <person name="Teichmann S.A."/>
            <person name="Ueda H.R."/>
            <person name="van Nimwegen E."/>
            <person name="Verardo R."/>
            <person name="Wei C.L."/>
            <person name="Yagi K."/>
            <person name="Yamanishi H."/>
            <person name="Zabarovsky E."/>
            <person name="Zhu S."/>
            <person name="Zimmer A."/>
            <person name="Hide W."/>
            <person name="Bult C."/>
            <person name="Grimmond S.M."/>
            <person name="Teasdale R.D."/>
            <person name="Liu E.T."/>
            <person name="Brusic V."/>
            <person name="Quackenbush J."/>
            <person name="Wahlestedt C."/>
            <person name="Mattick J.S."/>
            <person name="Hume D.A."/>
            <person name="Kai C."/>
            <person name="Sasaki D."/>
            <person name="Tomaru Y."/>
            <person name="Fukuda S."/>
            <person name="Kanamori-Katayama M."/>
            <person name="Suzuki M."/>
            <person name="Aoki J."/>
            <person name="Arakawa T."/>
            <person name="Iida J."/>
            <person name="Imamura K."/>
            <person name="Itoh M."/>
            <person name="Kato T."/>
            <person name="Kawaji H."/>
            <person name="Kawagashira N."/>
            <person name="Kawashima T."/>
            <person name="Kojima M."/>
            <person name="Kondo S."/>
            <person name="Konno H."/>
            <person name="Nakano K."/>
            <person name="Ninomiya N."/>
            <person name="Nishio T."/>
            <person name="Okada M."/>
            <person name="Plessy C."/>
            <person name="Shibata K."/>
            <person name="Shiraki T."/>
            <person name="Suzuki S."/>
            <person name="Tagami M."/>
            <person name="Waki K."/>
            <person name="Watahiki A."/>
            <person name="Okamura-Oho Y."/>
            <person name="Suzuki H."/>
            <person name="Kawai J."/>
            <person name="Hayashizaki Y."/>
        </authorList>
    </citation>
    <scope>NUCLEOTIDE SEQUENCE [LARGE SCALE MRNA]</scope>
    <source>
        <strain>C57BL/6J</strain>
        <tissue>Inner ear</tissue>
        <tissue>Liver</tissue>
        <tissue>Spleen</tissue>
    </source>
</reference>
<reference key="5">
    <citation type="submission" date="2005-07" db="EMBL/GenBank/DDBJ databases">
        <title>Cloning of mouse full open reading frames in Gateway(R) system entry vector (pDONR201).</title>
        <authorList>
            <person name="Ebert L."/>
            <person name="Muenstermann E."/>
            <person name="Schatten R."/>
            <person name="Henze S."/>
            <person name="Bohn E."/>
            <person name="Mollenhauer J."/>
            <person name="Wiemann S."/>
            <person name="Schick M."/>
            <person name="Korn B."/>
        </authorList>
    </citation>
    <scope>NUCLEOTIDE SEQUENCE [LARGE SCALE MRNA]</scope>
</reference>
<reference key="6">
    <citation type="submission" date="2005-07" db="EMBL/GenBank/DDBJ databases">
        <authorList>
            <person name="Mural R.J."/>
            <person name="Adams M.D."/>
            <person name="Myers E.W."/>
            <person name="Smith H.O."/>
            <person name="Venter J.C."/>
        </authorList>
    </citation>
    <scope>NUCLEOTIDE SEQUENCE [LARGE SCALE GENOMIC DNA]</scope>
</reference>
<reference key="7">
    <citation type="journal article" date="2004" name="Genome Res.">
        <title>The status, quality, and expansion of the NIH full-length cDNA project: the Mammalian Gene Collection (MGC).</title>
        <authorList>
            <consortium name="The MGC Project Team"/>
        </authorList>
    </citation>
    <scope>NUCLEOTIDE SEQUENCE [LARGE SCALE MRNA]</scope>
    <source>
        <strain>FVB/N</strain>
        <tissue>Mammary gland</tissue>
    </source>
</reference>
<reference key="8">
    <citation type="journal article" date="1992" name="Eur. J. Immunol.">
        <title>Antigen processing for presentation by class II major histocompatibility complex requires cleavage by cathepsin E.</title>
        <authorList>
            <person name="Bennett K."/>
            <person name="Levine T."/>
            <person name="Ellis J.S."/>
            <person name="Peanasky R.J."/>
            <person name="Samloff I.M."/>
            <person name="Kay J."/>
            <person name="Chain B.M."/>
        </authorList>
    </citation>
    <scope>FUNCTION</scope>
    <scope>SUBCELLULAR LOCATION</scope>
</reference>
<reference key="9">
    <citation type="journal article" date="1994" name="J. Biol. Chem.">
        <title>Subcellular localization and targeting of cathepsin E.</title>
        <authorList>
            <person name="Finley E.M."/>
            <person name="Kornfeld S."/>
        </authorList>
    </citation>
    <scope>GLYCOSYLATION</scope>
</reference>
<reference key="10">
    <citation type="journal article" date="2001" name="Eur. J. Biochem.">
        <title>Regulation of human and mouse procathepsin E gene expression.</title>
        <authorList>
            <person name="Cook M."/>
            <person name="Caswell R.C."/>
            <person name="Richards R.J."/>
            <person name="Kay J."/>
            <person name="Tatnell P.J."/>
        </authorList>
    </citation>
    <scope>TISSUE SPECIFICITY</scope>
</reference>
<reference key="11">
    <citation type="journal article" date="2002" name="J. Biol. Chem.">
        <title>Involvement of cathepsin E in exogenous antigen processing in primary cultured murine microglia.</title>
        <authorList>
            <person name="Nishioku T."/>
            <person name="Hashimoto K."/>
            <person name="Yamashita K."/>
            <person name="Liou S.-Y."/>
            <person name="Kagamiishi Y."/>
            <person name="Maegawa H."/>
            <person name="Katsube N."/>
            <person name="Peters C."/>
            <person name="von Figura K."/>
            <person name="Saftig P."/>
            <person name="Katunuma N."/>
            <person name="Yamamoto K."/>
            <person name="Nakanishi H."/>
        </authorList>
    </citation>
    <scope>FUNCTION</scope>
</reference>
<reference key="12">
    <citation type="journal article" date="2010" name="Cell">
        <title>A tissue-specific atlas of mouse protein phosphorylation and expression.</title>
        <authorList>
            <person name="Huttlin E.L."/>
            <person name="Jedrychowski M.P."/>
            <person name="Elias J.E."/>
            <person name="Goswami T."/>
            <person name="Rad R."/>
            <person name="Beausoleil S.A."/>
            <person name="Villen J."/>
            <person name="Haas W."/>
            <person name="Sowa M.E."/>
            <person name="Gygi S.P."/>
        </authorList>
    </citation>
    <scope>IDENTIFICATION BY MASS SPECTROMETRY [LARGE SCALE ANALYSIS]</scope>
    <source>
        <tissue>Spleen</tissue>
    </source>
</reference>
<protein>
    <recommendedName>
        <fullName>Cathepsin E</fullName>
        <ecNumber>3.4.23.34</ecNumber>
    </recommendedName>
</protein>
<evidence type="ECO:0000250" key="1"/>
<evidence type="ECO:0000255" key="2"/>
<evidence type="ECO:0000255" key="3">
    <source>
        <dbReference type="PROSITE-ProRule" id="PRU01103"/>
    </source>
</evidence>
<evidence type="ECO:0000255" key="4">
    <source>
        <dbReference type="PROSITE-ProRule" id="PRU10094"/>
    </source>
</evidence>
<evidence type="ECO:0000269" key="5">
    <source>
    </source>
</evidence>
<evidence type="ECO:0000269" key="6">
    <source>
    </source>
</evidence>
<evidence type="ECO:0000269" key="7">
    <source>
    </source>
</evidence>
<evidence type="ECO:0000269" key="8">
    <source>
    </source>
</evidence>
<evidence type="ECO:0000269" key="9">
    <source>
    </source>
</evidence>
<evidence type="ECO:0000269" key="10">
    <source ref="3"/>
</evidence>
<evidence type="ECO:0000305" key="11"/>